<sequence>MDVLHILQTNFVSIIIGFVVIILLWMNRGKQSNSRLPPGPAPIPLLGNLLRMDVKAPYKLYMELSKKYGSVFTVWLGSKPVVVISGYQAIKDAFVTQGEEFSGRANYPVIMTVSKGYGVLVSSGKRSKDLRRFSLMTLKTFGMGRRSIEERVQEEAKMLVKAFGEYRDSVVNPKELLCNCVGNVICSIVFGHRFENDDPMFQLIQKAVDAYFNVLSSPIGAMYNMFPRIVWCFPGNHHEMFAIVNKAKVYIQEQAEIRLKTLNISEPQDFIEAFLVKMLEEKDDPNTEFNNGNMVMTAWSLFAAGTETTSSTLRQSFLMMIKYPHIQESVQKEIDEVIGSRVPTVDDRVKMPYTDAVIHEVQRYMDLSPTSVPHKVMRDTEFYNYHIPEGTMVLPLLSSVLVDPKLFKNPDEFDPENFLDENGVFKKNDGFFAFGVGKRACPGEALARVELFLFFTSVLQRFTFTGTKPPEEINIEPACSSFGRLPRSYDCYIKLRTEK</sequence>
<accession>Q92088</accession>
<reference key="1">
    <citation type="journal article" date="1998" name="Arch. Biochem. Biophys.">
        <title>CYP2M1: cloning, sequencing, and expression of a new cytochrome P450 from rainbow trout liver with fatty acid (omega-6)-hydroxylation activity.</title>
        <authorList>
            <person name="Yang Y.-H."/>
            <person name="Wang J.-L."/>
            <person name="Miranda C.L."/>
            <person name="Buhler D.R."/>
        </authorList>
    </citation>
    <scope>NUCLEOTIDE SEQUENCE [MRNA]</scope>
    <source>
        <strain>Shasta</strain>
        <tissue>Liver</tissue>
    </source>
</reference>
<reference key="2">
    <citation type="journal article" date="1990" name="Biochem. Biophys. Res. Commun.">
        <title>Regiospecificity in the hydroxylation of lauric acid by rainbow trout hepatic cytochrome P450 isozymes.</title>
        <authorList>
            <person name="Miranda C.L."/>
            <person name="Wang J.L."/>
            <person name="Henderson M.C."/>
            <person name="Williams D.E."/>
            <person name="Buhler D.R."/>
        </authorList>
    </citation>
    <scope>CHARACTERIZATION</scope>
</reference>
<name>CP2M1_ONCMY</name>
<feature type="chain" id="PRO_0000051777" description="Cytochrome P450 2M1">
    <location>
        <begin position="1"/>
        <end position="499"/>
    </location>
</feature>
<feature type="binding site" description="axial binding residue" evidence="1">
    <location>
        <position position="441"/>
    </location>
    <ligand>
        <name>heme</name>
        <dbReference type="ChEBI" id="CHEBI:30413"/>
    </ligand>
    <ligandPart>
        <name>Fe</name>
        <dbReference type="ChEBI" id="CHEBI:18248"/>
    </ligandPart>
</feature>
<protein>
    <recommendedName>
        <fullName>Cytochrome P450 2M1</fullName>
        <ecNumber>1.14.14.1</ecNumber>
    </recommendedName>
    <alternativeName>
        <fullName>CYPIIM1</fullName>
    </alternativeName>
    <alternativeName>
        <fullName>LMC1</fullName>
    </alternativeName>
    <alternativeName>
        <fullName>Lauric acid omega-6-hydroxylase</fullName>
    </alternativeName>
</protein>
<proteinExistence type="evidence at protein level"/>
<evidence type="ECO:0000250" key="1"/>
<evidence type="ECO:0000305" key="2"/>
<organism>
    <name type="scientific">Oncorhynchus mykiss</name>
    <name type="common">Rainbow trout</name>
    <name type="synonym">Salmo gairdneri</name>
    <dbReference type="NCBI Taxonomy" id="8022"/>
    <lineage>
        <taxon>Eukaryota</taxon>
        <taxon>Metazoa</taxon>
        <taxon>Chordata</taxon>
        <taxon>Craniata</taxon>
        <taxon>Vertebrata</taxon>
        <taxon>Euteleostomi</taxon>
        <taxon>Actinopterygii</taxon>
        <taxon>Neopterygii</taxon>
        <taxon>Teleostei</taxon>
        <taxon>Protacanthopterygii</taxon>
        <taxon>Salmoniformes</taxon>
        <taxon>Salmonidae</taxon>
        <taxon>Salmoninae</taxon>
        <taxon>Oncorhynchus</taxon>
    </lineage>
</organism>
<keyword id="KW-0256">Endoplasmic reticulum</keyword>
<keyword id="KW-0349">Heme</keyword>
<keyword id="KW-0408">Iron</keyword>
<keyword id="KW-0472">Membrane</keyword>
<keyword id="KW-0479">Metal-binding</keyword>
<keyword id="KW-0492">Microsome</keyword>
<keyword id="KW-0503">Monooxygenase</keyword>
<keyword id="KW-0560">Oxidoreductase</keyword>
<dbReference type="EC" id="1.14.14.1"/>
<dbReference type="EMBL" id="U16657">
    <property type="protein sequence ID" value="AAA62499.1"/>
    <property type="molecule type" value="mRNA"/>
</dbReference>
<dbReference type="SMR" id="Q92088"/>
<dbReference type="Proteomes" id="UP000694395">
    <property type="component" value="Unplaced"/>
</dbReference>
<dbReference type="GO" id="GO:0005789">
    <property type="term" value="C:endoplasmic reticulum membrane"/>
    <property type="evidence" value="ECO:0007669"/>
    <property type="project" value="UniProtKB-SubCell"/>
</dbReference>
<dbReference type="GO" id="GO:0016020">
    <property type="term" value="C:membrane"/>
    <property type="evidence" value="ECO:0000315"/>
    <property type="project" value="AgBase"/>
</dbReference>
<dbReference type="GO" id="GO:0020037">
    <property type="term" value="F:heme binding"/>
    <property type="evidence" value="ECO:0007669"/>
    <property type="project" value="InterPro"/>
</dbReference>
<dbReference type="GO" id="GO:0005506">
    <property type="term" value="F:iron ion binding"/>
    <property type="evidence" value="ECO:0007669"/>
    <property type="project" value="InterPro"/>
</dbReference>
<dbReference type="GO" id="GO:0016712">
    <property type="term" value="F:oxidoreductase activity, acting on paired donors, with incorporation or reduction of molecular oxygen, reduced flavin or flavoprotein as one donor, and incorporation of one atom of oxygen"/>
    <property type="evidence" value="ECO:0007669"/>
    <property type="project" value="UniProtKB-EC"/>
</dbReference>
<dbReference type="GO" id="GO:0048252">
    <property type="term" value="P:lauric acid metabolic process"/>
    <property type="evidence" value="ECO:0000314"/>
    <property type="project" value="AgBase"/>
</dbReference>
<dbReference type="GO" id="GO:0002933">
    <property type="term" value="P:lipid hydroxylation"/>
    <property type="evidence" value="ECO:0000314"/>
    <property type="project" value="AgBase"/>
</dbReference>
<dbReference type="GO" id="GO:0006805">
    <property type="term" value="P:xenobiotic metabolic process"/>
    <property type="evidence" value="ECO:0007669"/>
    <property type="project" value="TreeGrafter"/>
</dbReference>
<dbReference type="CDD" id="cd11026">
    <property type="entry name" value="CYP2"/>
    <property type="match status" value="1"/>
</dbReference>
<dbReference type="FunFam" id="1.10.630.10:FF:000238">
    <property type="entry name" value="Cytochrome P450 2A6"/>
    <property type="match status" value="1"/>
</dbReference>
<dbReference type="Gene3D" id="1.10.630.10">
    <property type="entry name" value="Cytochrome P450"/>
    <property type="match status" value="1"/>
</dbReference>
<dbReference type="InterPro" id="IPR001128">
    <property type="entry name" value="Cyt_P450"/>
</dbReference>
<dbReference type="InterPro" id="IPR017972">
    <property type="entry name" value="Cyt_P450_CS"/>
</dbReference>
<dbReference type="InterPro" id="IPR002401">
    <property type="entry name" value="Cyt_P450_E_grp-I"/>
</dbReference>
<dbReference type="InterPro" id="IPR036396">
    <property type="entry name" value="Cyt_P450_sf"/>
</dbReference>
<dbReference type="InterPro" id="IPR050182">
    <property type="entry name" value="Cytochrome_P450_fam2"/>
</dbReference>
<dbReference type="PANTHER" id="PTHR24300:SF346">
    <property type="entry name" value="CYTOCHROME P450 2C44"/>
    <property type="match status" value="1"/>
</dbReference>
<dbReference type="PANTHER" id="PTHR24300">
    <property type="entry name" value="CYTOCHROME P450 508A4-RELATED"/>
    <property type="match status" value="1"/>
</dbReference>
<dbReference type="Pfam" id="PF00067">
    <property type="entry name" value="p450"/>
    <property type="match status" value="1"/>
</dbReference>
<dbReference type="PRINTS" id="PR00463">
    <property type="entry name" value="EP450I"/>
</dbReference>
<dbReference type="PRINTS" id="PR00385">
    <property type="entry name" value="P450"/>
</dbReference>
<dbReference type="SUPFAM" id="SSF48264">
    <property type="entry name" value="Cytochrome P450"/>
    <property type="match status" value="1"/>
</dbReference>
<dbReference type="PROSITE" id="PS00086">
    <property type="entry name" value="CYTOCHROME_P450"/>
    <property type="match status" value="1"/>
</dbReference>
<comment type="function">
    <text>Has (omega-6)-hydroxylation activity toward lauric acid.</text>
</comment>
<comment type="catalytic activity">
    <reaction>
        <text>an organic molecule + reduced [NADPH--hemoprotein reductase] + O2 = an alcohol + oxidized [NADPH--hemoprotein reductase] + H2O + H(+)</text>
        <dbReference type="Rhea" id="RHEA:17149"/>
        <dbReference type="Rhea" id="RHEA-COMP:11964"/>
        <dbReference type="Rhea" id="RHEA-COMP:11965"/>
        <dbReference type="ChEBI" id="CHEBI:15377"/>
        <dbReference type="ChEBI" id="CHEBI:15378"/>
        <dbReference type="ChEBI" id="CHEBI:15379"/>
        <dbReference type="ChEBI" id="CHEBI:30879"/>
        <dbReference type="ChEBI" id="CHEBI:57618"/>
        <dbReference type="ChEBI" id="CHEBI:58210"/>
        <dbReference type="ChEBI" id="CHEBI:142491"/>
        <dbReference type="EC" id="1.14.14.1"/>
    </reaction>
</comment>
<comment type="cofactor">
    <cofactor evidence="1">
        <name>heme</name>
        <dbReference type="ChEBI" id="CHEBI:30413"/>
    </cofactor>
</comment>
<comment type="subcellular location">
    <subcellularLocation>
        <location evidence="1">Endoplasmic reticulum membrane</location>
        <topology evidence="1">Peripheral membrane protein</topology>
    </subcellularLocation>
    <subcellularLocation>
        <location evidence="1">Microsome membrane</location>
        <topology evidence="1">Peripheral membrane protein</topology>
    </subcellularLocation>
</comment>
<comment type="tissue specificity">
    <text>In kidney and in liver from juvenile and sexually mature trout from both sexes.</text>
</comment>
<comment type="similarity">
    <text evidence="2">Belongs to the cytochrome P450 family.</text>
</comment>
<gene>
    <name type="primary">cyp2m1</name>
</gene>